<protein>
    <recommendedName>
        <fullName evidence="1">Fe/S biogenesis protein NfuA</fullName>
    </recommendedName>
</protein>
<reference key="1">
    <citation type="submission" date="2008-02" db="EMBL/GenBank/DDBJ databases">
        <title>Complete sequence of Escherichia coli C str. ATCC 8739.</title>
        <authorList>
            <person name="Copeland A."/>
            <person name="Lucas S."/>
            <person name="Lapidus A."/>
            <person name="Glavina del Rio T."/>
            <person name="Dalin E."/>
            <person name="Tice H."/>
            <person name="Bruce D."/>
            <person name="Goodwin L."/>
            <person name="Pitluck S."/>
            <person name="Kiss H."/>
            <person name="Brettin T."/>
            <person name="Detter J.C."/>
            <person name="Han C."/>
            <person name="Kuske C.R."/>
            <person name="Schmutz J."/>
            <person name="Larimer F."/>
            <person name="Land M."/>
            <person name="Hauser L."/>
            <person name="Kyrpides N."/>
            <person name="Mikhailova N."/>
            <person name="Ingram L."/>
            <person name="Richardson P."/>
        </authorList>
    </citation>
    <scope>NUCLEOTIDE SEQUENCE [LARGE SCALE GENOMIC DNA]</scope>
    <source>
        <strain>ATCC 8739 / DSM 1576 / NBRC 3972 / NCIMB 8545 / WDCM 00012 / Crooks</strain>
    </source>
</reference>
<organism>
    <name type="scientific">Escherichia coli (strain ATCC 8739 / DSM 1576 / NBRC 3972 / NCIMB 8545 / WDCM 00012 / Crooks)</name>
    <dbReference type="NCBI Taxonomy" id="481805"/>
    <lineage>
        <taxon>Bacteria</taxon>
        <taxon>Pseudomonadati</taxon>
        <taxon>Pseudomonadota</taxon>
        <taxon>Gammaproteobacteria</taxon>
        <taxon>Enterobacterales</taxon>
        <taxon>Enterobacteriaceae</taxon>
        <taxon>Escherichia</taxon>
    </lineage>
</organism>
<evidence type="ECO:0000255" key="1">
    <source>
        <dbReference type="HAMAP-Rule" id="MF_01637"/>
    </source>
</evidence>
<sequence>MIRISDAAQAHFAKLLANQEEGTQIRVFVINPGTPNAECGVSYCPPDAVEATDTALKFDLLTAYVDELSAPYLEDAEIDFVTDQLGSQLTLKAPNAKMRKVADDAPLMERVEYMLQSQINPQLAGHGGRVSLMEITEDGYAILQFGGGCNGCSMVDVTLKEGIEKQLLNEFPELKGVRDLTEHQRGEHSYY</sequence>
<name>NFUA_ECOLC</name>
<dbReference type="EMBL" id="CP000946">
    <property type="protein sequence ID" value="ACA75977.1"/>
    <property type="molecule type" value="Genomic_DNA"/>
</dbReference>
<dbReference type="RefSeq" id="WP_000619389.1">
    <property type="nucleotide sequence ID" value="NZ_MTFT01000001.1"/>
</dbReference>
<dbReference type="SMR" id="B1IP51"/>
<dbReference type="GeneID" id="93778582"/>
<dbReference type="KEGG" id="ecl:EcolC_0299"/>
<dbReference type="HOGENOM" id="CLU_094569_0_0_6"/>
<dbReference type="GO" id="GO:0051539">
    <property type="term" value="F:4 iron, 4 sulfur cluster binding"/>
    <property type="evidence" value="ECO:0007669"/>
    <property type="project" value="UniProtKB-UniRule"/>
</dbReference>
<dbReference type="GO" id="GO:0005506">
    <property type="term" value="F:iron ion binding"/>
    <property type="evidence" value="ECO:0007669"/>
    <property type="project" value="InterPro"/>
</dbReference>
<dbReference type="GO" id="GO:0016226">
    <property type="term" value="P:iron-sulfur cluster assembly"/>
    <property type="evidence" value="ECO:0007669"/>
    <property type="project" value="UniProtKB-UniRule"/>
</dbReference>
<dbReference type="GO" id="GO:0051604">
    <property type="term" value="P:protein maturation"/>
    <property type="evidence" value="ECO:0007669"/>
    <property type="project" value="UniProtKB-UniRule"/>
</dbReference>
<dbReference type="FunFam" id="2.60.300.12:FF:000004">
    <property type="entry name" value="Fe/S biogenesis protein NfuA"/>
    <property type="match status" value="1"/>
</dbReference>
<dbReference type="FunFam" id="3.30.300.130:FF:000002">
    <property type="entry name" value="Fe/S biogenesis protein NfuA"/>
    <property type="match status" value="1"/>
</dbReference>
<dbReference type="Gene3D" id="3.30.300.130">
    <property type="entry name" value="Fe-S cluster assembly (FSCA)"/>
    <property type="match status" value="1"/>
</dbReference>
<dbReference type="Gene3D" id="2.60.300.12">
    <property type="entry name" value="HesB-like domain"/>
    <property type="match status" value="1"/>
</dbReference>
<dbReference type="HAMAP" id="MF_01637">
    <property type="entry name" value="Fe_S_biogen_NfuA"/>
    <property type="match status" value="1"/>
</dbReference>
<dbReference type="InterPro" id="IPR017726">
    <property type="entry name" value="Fe/S_biogenesis_protein_NfuA"/>
</dbReference>
<dbReference type="InterPro" id="IPR000361">
    <property type="entry name" value="FeS_biogenesis"/>
</dbReference>
<dbReference type="InterPro" id="IPR034904">
    <property type="entry name" value="FSCA_dom_sf"/>
</dbReference>
<dbReference type="InterPro" id="IPR035903">
    <property type="entry name" value="HesB-like_dom_sf"/>
</dbReference>
<dbReference type="InterPro" id="IPR001075">
    <property type="entry name" value="NIF_FeS_clus_asmbl_NifU_C"/>
</dbReference>
<dbReference type="NCBIfam" id="NF008392">
    <property type="entry name" value="PRK11190.1"/>
    <property type="match status" value="1"/>
</dbReference>
<dbReference type="NCBIfam" id="TIGR03341">
    <property type="entry name" value="YhgI_GntY"/>
    <property type="match status" value="1"/>
</dbReference>
<dbReference type="PANTHER" id="PTHR11178:SF51">
    <property type="entry name" value="FE_S BIOGENESIS PROTEIN NFUA"/>
    <property type="match status" value="1"/>
</dbReference>
<dbReference type="PANTHER" id="PTHR11178">
    <property type="entry name" value="IRON-SULFUR CLUSTER SCAFFOLD PROTEIN NFU-RELATED"/>
    <property type="match status" value="1"/>
</dbReference>
<dbReference type="Pfam" id="PF01521">
    <property type="entry name" value="Fe-S_biosyn"/>
    <property type="match status" value="1"/>
</dbReference>
<dbReference type="Pfam" id="PF01106">
    <property type="entry name" value="NifU"/>
    <property type="match status" value="1"/>
</dbReference>
<dbReference type="SUPFAM" id="SSF117916">
    <property type="entry name" value="Fe-S cluster assembly (FSCA) domain-like"/>
    <property type="match status" value="1"/>
</dbReference>
<dbReference type="SUPFAM" id="SSF89360">
    <property type="entry name" value="HesB-like domain"/>
    <property type="match status" value="1"/>
</dbReference>
<accession>B1IP51</accession>
<feature type="chain" id="PRO_1000088195" description="Fe/S biogenesis protein NfuA">
    <location>
        <begin position="1"/>
        <end position="191"/>
    </location>
</feature>
<feature type="binding site" evidence="1">
    <location>
        <position position="149"/>
    </location>
    <ligand>
        <name>[4Fe-4S] cluster</name>
        <dbReference type="ChEBI" id="CHEBI:49883"/>
    </ligand>
</feature>
<feature type="binding site" evidence="1">
    <location>
        <position position="152"/>
    </location>
    <ligand>
        <name>[4Fe-4S] cluster</name>
        <dbReference type="ChEBI" id="CHEBI:49883"/>
    </ligand>
</feature>
<keyword id="KW-0004">4Fe-4S</keyword>
<keyword id="KW-0408">Iron</keyword>
<keyword id="KW-0411">Iron-sulfur</keyword>
<keyword id="KW-0479">Metal-binding</keyword>
<proteinExistence type="inferred from homology"/>
<comment type="function">
    <text evidence="1">Involved in iron-sulfur cluster biogenesis. Binds a 4Fe-4S cluster, can transfer this cluster to apoproteins, and thereby intervenes in the maturation of Fe/S proteins. Could also act as a scaffold/chaperone for damaged Fe/S proteins.</text>
</comment>
<comment type="cofactor">
    <cofactor evidence="1">
        <name>[4Fe-4S] cluster</name>
        <dbReference type="ChEBI" id="CHEBI:49883"/>
    </cofactor>
    <text evidence="1">Binds 1 [4Fe-4S] cluster per subunit. The cluster is presumably bound at the interface of two monomers.</text>
</comment>
<comment type="subunit">
    <text evidence="1">Homodimer.</text>
</comment>
<comment type="similarity">
    <text evidence="1">Belongs to the NfuA family.</text>
</comment>
<gene>
    <name evidence="1" type="primary">nfuA</name>
    <name type="ordered locus">EcolC_0299</name>
</gene>